<reference key="1">
    <citation type="journal article" date="1992" name="Plant Cell">
        <title>The small genome of Arabidopsis contains at least six expressed alpha-tubulin genes.</title>
        <authorList>
            <person name="Kopczak S.D."/>
            <person name="Haas N.A."/>
            <person name="Hussey P.J."/>
            <person name="Silflow C.D."/>
            <person name="Snustad D.P."/>
        </authorList>
    </citation>
    <scope>NUCLEOTIDE SEQUENCE [GENOMIC DNA]</scope>
    <source>
        <strain>cv. Columbia</strain>
    </source>
</reference>
<reference key="2">
    <citation type="journal article" date="2000" name="Nature">
        <title>Sequence and analysis of chromosome 1 of the plant Arabidopsis thaliana.</title>
        <authorList>
            <person name="Theologis A."/>
            <person name="Ecker J.R."/>
            <person name="Palm C.J."/>
            <person name="Federspiel N.A."/>
            <person name="Kaul S."/>
            <person name="White O."/>
            <person name="Alonso J."/>
            <person name="Altafi H."/>
            <person name="Araujo R."/>
            <person name="Bowman C.L."/>
            <person name="Brooks S.Y."/>
            <person name="Buehler E."/>
            <person name="Chan A."/>
            <person name="Chao Q."/>
            <person name="Chen H."/>
            <person name="Cheuk R.F."/>
            <person name="Chin C.W."/>
            <person name="Chung M.K."/>
            <person name="Conn L."/>
            <person name="Conway A.B."/>
            <person name="Conway A.R."/>
            <person name="Creasy T.H."/>
            <person name="Dewar K."/>
            <person name="Dunn P."/>
            <person name="Etgu P."/>
            <person name="Feldblyum T.V."/>
            <person name="Feng J.-D."/>
            <person name="Fong B."/>
            <person name="Fujii C.Y."/>
            <person name="Gill J.E."/>
            <person name="Goldsmith A.D."/>
            <person name="Haas B."/>
            <person name="Hansen N.F."/>
            <person name="Hughes B."/>
            <person name="Huizar L."/>
            <person name="Hunter J.L."/>
            <person name="Jenkins J."/>
            <person name="Johnson-Hopson C."/>
            <person name="Khan S."/>
            <person name="Khaykin E."/>
            <person name="Kim C.J."/>
            <person name="Koo H.L."/>
            <person name="Kremenetskaia I."/>
            <person name="Kurtz D.B."/>
            <person name="Kwan A."/>
            <person name="Lam B."/>
            <person name="Langin-Hooper S."/>
            <person name="Lee A."/>
            <person name="Lee J.M."/>
            <person name="Lenz C.A."/>
            <person name="Li J.H."/>
            <person name="Li Y.-P."/>
            <person name="Lin X."/>
            <person name="Liu S.X."/>
            <person name="Liu Z.A."/>
            <person name="Luros J.S."/>
            <person name="Maiti R."/>
            <person name="Marziali A."/>
            <person name="Militscher J."/>
            <person name="Miranda M."/>
            <person name="Nguyen M."/>
            <person name="Nierman W.C."/>
            <person name="Osborne B.I."/>
            <person name="Pai G."/>
            <person name="Peterson J."/>
            <person name="Pham P.K."/>
            <person name="Rizzo M."/>
            <person name="Rooney T."/>
            <person name="Rowley D."/>
            <person name="Sakano H."/>
            <person name="Salzberg S.L."/>
            <person name="Schwartz J.R."/>
            <person name="Shinn P."/>
            <person name="Southwick A.M."/>
            <person name="Sun H."/>
            <person name="Tallon L.J."/>
            <person name="Tambunga G."/>
            <person name="Toriumi M.J."/>
            <person name="Town C.D."/>
            <person name="Utterback T."/>
            <person name="Van Aken S."/>
            <person name="Vaysberg M."/>
            <person name="Vysotskaia V.S."/>
            <person name="Walker M."/>
            <person name="Wu D."/>
            <person name="Yu G."/>
            <person name="Fraser C.M."/>
            <person name="Venter J.C."/>
            <person name="Davis R.W."/>
        </authorList>
    </citation>
    <scope>NUCLEOTIDE SEQUENCE [LARGE SCALE GENOMIC DNA]</scope>
    <source>
        <strain>cv. Columbia</strain>
    </source>
</reference>
<reference key="3">
    <citation type="journal article" date="2017" name="Plant J.">
        <title>Araport11: a complete reannotation of the Arabidopsis thaliana reference genome.</title>
        <authorList>
            <person name="Cheng C.Y."/>
            <person name="Krishnakumar V."/>
            <person name="Chan A.P."/>
            <person name="Thibaud-Nissen F."/>
            <person name="Schobel S."/>
            <person name="Town C.D."/>
        </authorList>
    </citation>
    <scope>GENOME REANNOTATION</scope>
    <source>
        <strain>cv. Columbia</strain>
    </source>
</reference>
<reference key="4">
    <citation type="journal article" date="2003" name="Science">
        <title>Empirical analysis of transcriptional activity in the Arabidopsis genome.</title>
        <authorList>
            <person name="Yamada K."/>
            <person name="Lim J."/>
            <person name="Dale J.M."/>
            <person name="Chen H."/>
            <person name="Shinn P."/>
            <person name="Palm C.J."/>
            <person name="Southwick A.M."/>
            <person name="Wu H.C."/>
            <person name="Kim C.J."/>
            <person name="Nguyen M."/>
            <person name="Pham P.K."/>
            <person name="Cheuk R.F."/>
            <person name="Karlin-Newmann G."/>
            <person name="Liu S.X."/>
            <person name="Lam B."/>
            <person name="Sakano H."/>
            <person name="Wu T."/>
            <person name="Yu G."/>
            <person name="Miranda M."/>
            <person name="Quach H.L."/>
            <person name="Tripp M."/>
            <person name="Chang C.H."/>
            <person name="Lee J.M."/>
            <person name="Toriumi M.J."/>
            <person name="Chan M.M."/>
            <person name="Tang C.C."/>
            <person name="Onodera C.S."/>
            <person name="Deng J.M."/>
            <person name="Akiyama K."/>
            <person name="Ansari Y."/>
            <person name="Arakawa T."/>
            <person name="Banh J."/>
            <person name="Banno F."/>
            <person name="Bowser L."/>
            <person name="Brooks S.Y."/>
            <person name="Carninci P."/>
            <person name="Chao Q."/>
            <person name="Choy N."/>
            <person name="Enju A."/>
            <person name="Goldsmith A.D."/>
            <person name="Gurjal M."/>
            <person name="Hansen N.F."/>
            <person name="Hayashizaki Y."/>
            <person name="Johnson-Hopson C."/>
            <person name="Hsuan V.W."/>
            <person name="Iida K."/>
            <person name="Karnes M."/>
            <person name="Khan S."/>
            <person name="Koesema E."/>
            <person name="Ishida J."/>
            <person name="Jiang P.X."/>
            <person name="Jones T."/>
            <person name="Kawai J."/>
            <person name="Kamiya A."/>
            <person name="Meyers C."/>
            <person name="Nakajima M."/>
            <person name="Narusaka M."/>
            <person name="Seki M."/>
            <person name="Sakurai T."/>
            <person name="Satou M."/>
            <person name="Tamse R."/>
            <person name="Vaysberg M."/>
            <person name="Wallender E.K."/>
            <person name="Wong C."/>
            <person name="Yamamura Y."/>
            <person name="Yuan S."/>
            <person name="Shinozaki K."/>
            <person name="Davis R.W."/>
            <person name="Theologis A."/>
            <person name="Ecker J.R."/>
        </authorList>
    </citation>
    <scope>NUCLEOTIDE SEQUENCE [LARGE SCALE MRNA]</scope>
    <source>
        <strain>cv. Columbia</strain>
    </source>
</reference>
<reference key="5">
    <citation type="submission" date="2006-07" db="EMBL/GenBank/DDBJ databases">
        <title>Large-scale analysis of RIKEN Arabidopsis full-length (RAFL) cDNAs.</title>
        <authorList>
            <person name="Totoki Y."/>
            <person name="Seki M."/>
            <person name="Ishida J."/>
            <person name="Nakajima M."/>
            <person name="Enju A."/>
            <person name="Kamiya A."/>
            <person name="Narusaka M."/>
            <person name="Shin-i T."/>
            <person name="Nakagawa M."/>
            <person name="Sakamoto N."/>
            <person name="Oishi K."/>
            <person name="Kohara Y."/>
            <person name="Kobayashi M."/>
            <person name="Toyoda A."/>
            <person name="Sakaki Y."/>
            <person name="Sakurai T."/>
            <person name="Iida K."/>
            <person name="Akiyama K."/>
            <person name="Satou M."/>
            <person name="Toyoda T."/>
            <person name="Konagaya A."/>
            <person name="Carninci P."/>
            <person name="Kawai J."/>
            <person name="Hayashizaki Y."/>
            <person name="Shinozaki K."/>
        </authorList>
    </citation>
    <scope>NUCLEOTIDE SEQUENCE [LARGE SCALE MRNA]</scope>
    <source>
        <strain>cv. Columbia</strain>
    </source>
</reference>
<accession>Q0WV25</accession>
<accession>P29510</accession>
<proteinExistence type="evidence at transcript level"/>
<sequence length="450" mass="49541">MRECISIHIGQAGIQVGNACWELYCLEHGIQPDGQMPSDKTVGGGDDAFNTFFSETGAGKHVPRAVFVDLEPTVIDEVRTGTYRQLFHPEQLISGKEDAANNFARGHYTIGKEIVDLCLDRIRKLADNCTGLQGFLVFNAVGGGTGSGLGSLLLERLSVDYGKKSKLGFTVYPSPQVSTSVVEPYNSVLSTHSLLEHTDVSILLDNEAIYDICRRSLSIERPTYTNLNRLVSQVISSLTASLRFDGALNVDVTEFQTNLVPYPRIHFMLSSYAPVISAEKAFHEQLSVAEITNSAFEPASMMAKCDPRHGKYMACCLMYRGDVVPKDVNAAVGTIKTKRTIQFVDWCPTGFKCGINYQPPTVVPGGDLAKVQRAVCMISNSTSVAEVFSRIDHKFDLMYAKRAFVHWYVGEGMEEGEFSEAREDLAALEKDYEEVGAEGGDDEDDEGEEY</sequence>
<dbReference type="EC" id="3.6.5.-" evidence="2"/>
<dbReference type="EMBL" id="M84697">
    <property type="protein sequence ID" value="AAA32890.1"/>
    <property type="molecule type" value="Genomic_DNA"/>
</dbReference>
<dbReference type="EMBL" id="AC004809">
    <property type="protein sequence ID" value="AAF40454.1"/>
    <property type="molecule type" value="Genomic_DNA"/>
</dbReference>
<dbReference type="EMBL" id="CP002684">
    <property type="protein sequence ID" value="AEE27747.1"/>
    <property type="molecule type" value="Genomic_DNA"/>
</dbReference>
<dbReference type="EMBL" id="AY058199">
    <property type="protein sequence ID" value="AAL25612.1"/>
    <property type="molecule type" value="mRNA"/>
</dbReference>
<dbReference type="EMBL" id="AY142005">
    <property type="protein sequence ID" value="AAM98269.1"/>
    <property type="molecule type" value="mRNA"/>
</dbReference>
<dbReference type="EMBL" id="AK226954">
    <property type="protein sequence ID" value="BAE99023.1"/>
    <property type="molecule type" value="mRNA"/>
</dbReference>
<dbReference type="PIR" id="JQ1594">
    <property type="entry name" value="JQ1594"/>
</dbReference>
<dbReference type="RefSeq" id="NP_171974.1">
    <property type="nucleotide sequence ID" value="NM_100360.4"/>
</dbReference>
<dbReference type="SMR" id="Q0WV25"/>
<dbReference type="BioGRID" id="24640">
    <property type="interactions" value="8"/>
</dbReference>
<dbReference type="BioGRID" id="26650">
    <property type="interactions" value="4"/>
</dbReference>
<dbReference type="FunCoup" id="Q0WV25">
    <property type="interactions" value="1868"/>
</dbReference>
<dbReference type="IntAct" id="Q0WV25">
    <property type="interactions" value="2"/>
</dbReference>
<dbReference type="STRING" id="3702.Q0WV25"/>
<dbReference type="GlyGen" id="Q0WV25">
    <property type="glycosylation" value="1 site, 1 O-linked glycan (1 site)"/>
</dbReference>
<dbReference type="EnsemblPlants" id="AT1G04820.1">
    <property type="protein sequence ID" value="AT1G04820.1"/>
    <property type="gene ID" value="AT1G04820"/>
</dbReference>
<dbReference type="EnsemblPlants" id="AT1G50010.1">
    <property type="protein sequence ID" value="AT1G50010.1"/>
    <property type="gene ID" value="AT1G50010"/>
</dbReference>
<dbReference type="GeneID" id="839405"/>
<dbReference type="Gramene" id="AT1G04820.1">
    <property type="protein sequence ID" value="AT1G04820.1"/>
    <property type="gene ID" value="AT1G04820"/>
</dbReference>
<dbReference type="Gramene" id="AT1G50010.1">
    <property type="protein sequence ID" value="AT1G50010.1"/>
    <property type="gene ID" value="AT1G50010"/>
</dbReference>
<dbReference type="KEGG" id="ath:AT1G04820"/>
<dbReference type="KEGG" id="ath:AT1G50010"/>
<dbReference type="Araport" id="AT1G04820"/>
<dbReference type="TAIR" id="AT1G04820">
    <property type="gene designation" value="TUA4"/>
</dbReference>
<dbReference type="HOGENOM" id="CLU_015718_0_0_1"/>
<dbReference type="InParanoid" id="Q0WV25"/>
<dbReference type="OMA" id="PEGTHIN"/>
<dbReference type="OrthoDB" id="1514140at2759"/>
<dbReference type="PhylomeDB" id="Q0WV25"/>
<dbReference type="CD-CODE" id="4299E36E">
    <property type="entry name" value="Nucleolus"/>
</dbReference>
<dbReference type="PRO" id="PR:Q0WV25"/>
<dbReference type="Proteomes" id="UP000006548">
    <property type="component" value="Chromosome 1"/>
</dbReference>
<dbReference type="ExpressionAtlas" id="Q0WV25">
    <property type="expression patterns" value="baseline and differential"/>
</dbReference>
<dbReference type="GO" id="GO:0005737">
    <property type="term" value="C:cytoplasm"/>
    <property type="evidence" value="ECO:0007669"/>
    <property type="project" value="UniProtKB-KW"/>
</dbReference>
<dbReference type="GO" id="GO:0005874">
    <property type="term" value="C:microtubule"/>
    <property type="evidence" value="ECO:0007669"/>
    <property type="project" value="UniProtKB-KW"/>
</dbReference>
<dbReference type="GO" id="GO:0005525">
    <property type="term" value="F:GTP binding"/>
    <property type="evidence" value="ECO:0007669"/>
    <property type="project" value="UniProtKB-KW"/>
</dbReference>
<dbReference type="GO" id="GO:0016787">
    <property type="term" value="F:hydrolase activity"/>
    <property type="evidence" value="ECO:0007669"/>
    <property type="project" value="UniProtKB-KW"/>
</dbReference>
<dbReference type="GO" id="GO:0046872">
    <property type="term" value="F:metal ion binding"/>
    <property type="evidence" value="ECO:0007669"/>
    <property type="project" value="UniProtKB-KW"/>
</dbReference>
<dbReference type="GO" id="GO:0005200">
    <property type="term" value="F:structural constituent of cytoskeleton"/>
    <property type="evidence" value="ECO:0007669"/>
    <property type="project" value="InterPro"/>
</dbReference>
<dbReference type="GO" id="GO:0007017">
    <property type="term" value="P:microtubule-based process"/>
    <property type="evidence" value="ECO:0007669"/>
    <property type="project" value="InterPro"/>
</dbReference>
<dbReference type="CDD" id="cd02186">
    <property type="entry name" value="alpha_tubulin"/>
    <property type="match status" value="1"/>
</dbReference>
<dbReference type="FunFam" id="1.10.287.600:FF:000005">
    <property type="entry name" value="Tubulin alpha chain"/>
    <property type="match status" value="1"/>
</dbReference>
<dbReference type="FunFam" id="3.30.1330.20:FF:000001">
    <property type="entry name" value="Tubulin alpha chain"/>
    <property type="match status" value="1"/>
</dbReference>
<dbReference type="FunFam" id="3.40.50.1440:FF:000004">
    <property type="entry name" value="Tubulin alpha chain"/>
    <property type="match status" value="1"/>
</dbReference>
<dbReference type="Gene3D" id="1.10.287.600">
    <property type="entry name" value="Helix hairpin bin"/>
    <property type="match status" value="1"/>
</dbReference>
<dbReference type="Gene3D" id="3.30.1330.20">
    <property type="entry name" value="Tubulin/FtsZ, C-terminal domain"/>
    <property type="match status" value="1"/>
</dbReference>
<dbReference type="Gene3D" id="3.40.50.1440">
    <property type="entry name" value="Tubulin/FtsZ, GTPase domain"/>
    <property type="match status" value="1"/>
</dbReference>
<dbReference type="InterPro" id="IPR002452">
    <property type="entry name" value="Alpha_tubulin"/>
</dbReference>
<dbReference type="InterPro" id="IPR008280">
    <property type="entry name" value="Tub_FtsZ_C"/>
</dbReference>
<dbReference type="InterPro" id="IPR000217">
    <property type="entry name" value="Tubulin"/>
</dbReference>
<dbReference type="InterPro" id="IPR037103">
    <property type="entry name" value="Tubulin/FtsZ-like_C"/>
</dbReference>
<dbReference type="InterPro" id="IPR018316">
    <property type="entry name" value="Tubulin/FtsZ_2-layer-sand-dom"/>
</dbReference>
<dbReference type="InterPro" id="IPR036525">
    <property type="entry name" value="Tubulin/FtsZ_GTPase_sf"/>
</dbReference>
<dbReference type="InterPro" id="IPR023123">
    <property type="entry name" value="Tubulin_C"/>
</dbReference>
<dbReference type="InterPro" id="IPR017975">
    <property type="entry name" value="Tubulin_CS"/>
</dbReference>
<dbReference type="InterPro" id="IPR003008">
    <property type="entry name" value="Tubulin_FtsZ_GTPase"/>
</dbReference>
<dbReference type="PANTHER" id="PTHR11588">
    <property type="entry name" value="TUBULIN"/>
    <property type="match status" value="1"/>
</dbReference>
<dbReference type="Pfam" id="PF00091">
    <property type="entry name" value="Tubulin"/>
    <property type="match status" value="1"/>
</dbReference>
<dbReference type="Pfam" id="PF03953">
    <property type="entry name" value="Tubulin_C"/>
    <property type="match status" value="1"/>
</dbReference>
<dbReference type="PRINTS" id="PR01162">
    <property type="entry name" value="ALPHATUBULIN"/>
</dbReference>
<dbReference type="PRINTS" id="PR01161">
    <property type="entry name" value="TUBULIN"/>
</dbReference>
<dbReference type="SMART" id="SM00864">
    <property type="entry name" value="Tubulin"/>
    <property type="match status" value="1"/>
</dbReference>
<dbReference type="SMART" id="SM00865">
    <property type="entry name" value="Tubulin_C"/>
    <property type="match status" value="1"/>
</dbReference>
<dbReference type="SUPFAM" id="SSF55307">
    <property type="entry name" value="Tubulin C-terminal domain-like"/>
    <property type="match status" value="1"/>
</dbReference>
<dbReference type="SUPFAM" id="SSF52490">
    <property type="entry name" value="Tubulin nucleotide-binding domain-like"/>
    <property type="match status" value="1"/>
</dbReference>
<dbReference type="PROSITE" id="PS00227">
    <property type="entry name" value="TUBULIN"/>
    <property type="match status" value="1"/>
</dbReference>
<name>TBA4_ARATH</name>
<keyword id="KW-0007">Acetylation</keyword>
<keyword id="KW-0963">Cytoplasm</keyword>
<keyword id="KW-0206">Cytoskeleton</keyword>
<keyword id="KW-0342">GTP-binding</keyword>
<keyword id="KW-0378">Hydrolase</keyword>
<keyword id="KW-0460">Magnesium</keyword>
<keyword id="KW-0479">Metal-binding</keyword>
<keyword id="KW-0493">Microtubule</keyword>
<keyword id="KW-0547">Nucleotide-binding</keyword>
<keyword id="KW-0597">Phosphoprotein</keyword>
<keyword id="KW-1185">Reference proteome</keyword>
<feature type="chain" id="PRO_0000419521" description="Tubulin alpha-4 chain">
    <location>
        <begin position="1"/>
        <end position="450"/>
    </location>
</feature>
<feature type="region of interest" description="Disordered" evidence="4">
    <location>
        <begin position="430"/>
        <end position="450"/>
    </location>
</feature>
<feature type="compositionally biased region" description="Acidic residues" evidence="4">
    <location>
        <begin position="431"/>
        <end position="450"/>
    </location>
</feature>
<feature type="active site" evidence="2">
    <location>
        <position position="254"/>
    </location>
</feature>
<feature type="binding site" evidence="2">
    <location>
        <position position="11"/>
    </location>
    <ligand>
        <name>GTP</name>
        <dbReference type="ChEBI" id="CHEBI:37565"/>
    </ligand>
</feature>
<feature type="binding site" evidence="2">
    <location>
        <position position="71"/>
    </location>
    <ligand>
        <name>GTP</name>
        <dbReference type="ChEBI" id="CHEBI:37565"/>
    </ligand>
</feature>
<feature type="binding site" evidence="2">
    <location>
        <position position="71"/>
    </location>
    <ligand>
        <name>Mg(2+)</name>
        <dbReference type="ChEBI" id="CHEBI:18420"/>
    </ligand>
</feature>
<feature type="binding site" evidence="2">
    <location>
        <position position="144"/>
    </location>
    <ligand>
        <name>GTP</name>
        <dbReference type="ChEBI" id="CHEBI:37565"/>
    </ligand>
</feature>
<feature type="binding site" evidence="2">
    <location>
        <position position="145"/>
    </location>
    <ligand>
        <name>GTP</name>
        <dbReference type="ChEBI" id="CHEBI:37565"/>
    </ligand>
</feature>
<feature type="binding site" evidence="2">
    <location>
        <position position="179"/>
    </location>
    <ligand>
        <name>GTP</name>
        <dbReference type="ChEBI" id="CHEBI:37565"/>
    </ligand>
</feature>
<feature type="binding site" evidence="2">
    <location>
        <position position="206"/>
    </location>
    <ligand>
        <name>GTP</name>
        <dbReference type="ChEBI" id="CHEBI:37565"/>
    </ligand>
</feature>
<feature type="binding site" evidence="2">
    <location>
        <position position="228"/>
    </location>
    <ligand>
        <name>GTP</name>
        <dbReference type="ChEBI" id="CHEBI:37565"/>
    </ligand>
</feature>
<feature type="site" description="Involved in polymerization">
    <location>
        <position position="450"/>
    </location>
</feature>
<feature type="modified residue" description="Phosphothreonine" evidence="3">
    <location>
        <position position="349"/>
    </location>
</feature>
<feature type="sequence conflict" description="In Ref. 5; BAE99023." evidence="5" ref="5">
    <original>E</original>
    <variation>G</variation>
    <location>
        <position position="433"/>
    </location>
</feature>
<gene>
    <name type="primary">TUBA4</name>
    <name type="synonym">TUA4</name>
    <name type="ordered locus">At1g04820</name>
    <name type="ORF">F13M7.19</name>
</gene>
<evidence type="ECO:0000250" key="1"/>
<evidence type="ECO:0000250" key="2">
    <source>
        <dbReference type="UniProtKB" id="P68363"/>
    </source>
</evidence>
<evidence type="ECO:0000250" key="3">
    <source>
        <dbReference type="UniProtKB" id="Q56WH1"/>
    </source>
</evidence>
<evidence type="ECO:0000256" key="4">
    <source>
        <dbReference type="SAM" id="MobiDB-lite"/>
    </source>
</evidence>
<evidence type="ECO:0000305" key="5"/>
<comment type="function">
    <text>Tubulin is the major constituent of microtubules, a cylinder consisting of laterally associated linear protofilaments composed of alpha- and beta-tubulin heterodimers. Microtubules grow by the addition of GTP-tubulin dimers to the microtubule end, where a stabilizing cap forms. Below the cap, tubulin dimers are in GDP-bound state, owing to GTPase activity of alpha-tubulin.</text>
</comment>
<comment type="catalytic activity">
    <reaction evidence="2">
        <text>GTP + H2O = GDP + phosphate + H(+)</text>
        <dbReference type="Rhea" id="RHEA:19669"/>
        <dbReference type="ChEBI" id="CHEBI:15377"/>
        <dbReference type="ChEBI" id="CHEBI:15378"/>
        <dbReference type="ChEBI" id="CHEBI:37565"/>
        <dbReference type="ChEBI" id="CHEBI:43474"/>
        <dbReference type="ChEBI" id="CHEBI:58189"/>
    </reaction>
    <physiologicalReaction direction="left-to-right" evidence="2">
        <dbReference type="Rhea" id="RHEA:19670"/>
    </physiologicalReaction>
</comment>
<comment type="cofactor">
    <cofactor evidence="2">
        <name>Mg(2+)</name>
        <dbReference type="ChEBI" id="CHEBI:18420"/>
    </cofactor>
</comment>
<comment type="subunit">
    <text>Dimer of alpha and beta chains. A typical microtubule is a hollow water-filled tube with an outer diameter of 25 nm and an inner diameter of 15 nM. Alpha-beta heterodimers associate head-to-tail to form protofilaments running lengthwise along the microtubule wall with the beta-tubulin subunit facing the microtubule plus end conferring a structural polarity. Microtubules usually have 13 protofilaments but different protofilament numbers can be found in some organisms and specialized cells.</text>
</comment>
<comment type="subcellular location">
    <subcellularLocation>
        <location>Cytoplasm</location>
        <location>Cytoskeleton</location>
    </subcellularLocation>
</comment>
<comment type="PTM">
    <text evidence="1">Undergoes a tyrosination/detyrosination cycle, the cyclic removal and re-addition of a C-terminal tyrosine residue by the enzymes tubulin tyrosine carboxypeptidase (TTCP) and tubulin tyrosine ligase (TTL), respectively.</text>
</comment>
<comment type="PTM">
    <text evidence="1">Acetylation of alpha chains at Lys-40 stabilizes microtubules and affects affinity and processivity of microtubule motors. This modification has a role in multiple cellular functions, ranging from cell motility, cell cycle progression or cell differentiation to intracellular trafficking and signaling (By similarity).</text>
</comment>
<comment type="miscellaneous">
    <text>There are six genes coding for alpha-tubulin. The sequences coded by genes 2 and 4 are identical.</text>
</comment>
<comment type="similarity">
    <text evidence="5">Belongs to the tubulin family.</text>
</comment>
<protein>
    <recommendedName>
        <fullName>Tubulin alpha-4 chain</fullName>
        <ecNumber evidence="2">3.6.5.-</ecNumber>
    </recommendedName>
</protein>
<organism>
    <name type="scientific">Arabidopsis thaliana</name>
    <name type="common">Mouse-ear cress</name>
    <dbReference type="NCBI Taxonomy" id="3702"/>
    <lineage>
        <taxon>Eukaryota</taxon>
        <taxon>Viridiplantae</taxon>
        <taxon>Streptophyta</taxon>
        <taxon>Embryophyta</taxon>
        <taxon>Tracheophyta</taxon>
        <taxon>Spermatophyta</taxon>
        <taxon>Magnoliopsida</taxon>
        <taxon>eudicotyledons</taxon>
        <taxon>Gunneridae</taxon>
        <taxon>Pentapetalae</taxon>
        <taxon>rosids</taxon>
        <taxon>malvids</taxon>
        <taxon>Brassicales</taxon>
        <taxon>Brassicaceae</taxon>
        <taxon>Camelineae</taxon>
        <taxon>Arabidopsis</taxon>
    </lineage>
</organism>